<comment type="function">
    <text evidence="1">Part of the MsrPQ system that repairs oxidized periplasmic proteins containing methionine sulfoxide residues (Met-O), using respiratory chain electrons. Thus protects these proteins from oxidative-stress damage caused by reactive species of oxygen and chlorine generated by the host defense mechanisms. MsrPQ is essential for the maintenance of envelope integrity under bleach stress, rescuing a wide series of structurally unrelated periplasmic proteins from methionine oxidation, including the primary periplasmic chaperone SurA and the lipoprotein Pal. MsrQ provides electrons for reduction to the reductase catalytic subunit MsrP, using the quinone pool of the respiratory chain.</text>
</comment>
<comment type="cofactor">
    <cofactor evidence="1">
        <name>FMN</name>
        <dbReference type="ChEBI" id="CHEBI:58210"/>
    </cofactor>
    <text evidence="1">Binds 1 FMN per subunit.</text>
</comment>
<comment type="cofactor">
    <cofactor evidence="1">
        <name>heme b</name>
        <dbReference type="ChEBI" id="CHEBI:60344"/>
    </cofactor>
    <text evidence="1">Binds 1 heme b (iron(II)-protoporphyrin IX) group per subunit.</text>
</comment>
<comment type="subunit">
    <text evidence="1">Heterodimer of a catalytic subunit (MsrP) and a heme-binding subunit (MsrQ).</text>
</comment>
<comment type="subcellular location">
    <subcellularLocation>
        <location evidence="1">Cell inner membrane</location>
        <topology evidence="1">Multi-pass membrane protein</topology>
    </subcellularLocation>
</comment>
<comment type="similarity">
    <text evidence="1">Belongs to the MsrQ family.</text>
</comment>
<dbReference type="EMBL" id="CU928160">
    <property type="protein sequence ID" value="CAQ98902.1"/>
    <property type="molecule type" value="Genomic_DNA"/>
</dbReference>
<dbReference type="RefSeq" id="WP_001240105.1">
    <property type="nucleotide sequence ID" value="NC_011741.1"/>
</dbReference>
<dbReference type="SMR" id="B7M3B0"/>
<dbReference type="GeneID" id="75205790"/>
<dbReference type="KEGG" id="ecr:ECIAI1_2052"/>
<dbReference type="HOGENOM" id="CLU_080662_1_0_6"/>
<dbReference type="GO" id="GO:0005886">
    <property type="term" value="C:plasma membrane"/>
    <property type="evidence" value="ECO:0007669"/>
    <property type="project" value="UniProtKB-SubCell"/>
</dbReference>
<dbReference type="GO" id="GO:0009055">
    <property type="term" value="F:electron transfer activity"/>
    <property type="evidence" value="ECO:0007669"/>
    <property type="project" value="UniProtKB-UniRule"/>
</dbReference>
<dbReference type="GO" id="GO:0010181">
    <property type="term" value="F:FMN binding"/>
    <property type="evidence" value="ECO:0007669"/>
    <property type="project" value="UniProtKB-UniRule"/>
</dbReference>
<dbReference type="GO" id="GO:0020037">
    <property type="term" value="F:heme binding"/>
    <property type="evidence" value="ECO:0007669"/>
    <property type="project" value="UniProtKB-UniRule"/>
</dbReference>
<dbReference type="GO" id="GO:0046872">
    <property type="term" value="F:metal ion binding"/>
    <property type="evidence" value="ECO:0007669"/>
    <property type="project" value="UniProtKB-KW"/>
</dbReference>
<dbReference type="GO" id="GO:0016679">
    <property type="term" value="F:oxidoreductase activity, acting on diphenols and related substances as donors"/>
    <property type="evidence" value="ECO:0007669"/>
    <property type="project" value="TreeGrafter"/>
</dbReference>
<dbReference type="GO" id="GO:0030091">
    <property type="term" value="P:protein repair"/>
    <property type="evidence" value="ECO:0007669"/>
    <property type="project" value="UniProtKB-UniRule"/>
</dbReference>
<dbReference type="HAMAP" id="MF_01207">
    <property type="entry name" value="MsrQ"/>
    <property type="match status" value="1"/>
</dbReference>
<dbReference type="InterPro" id="IPR013130">
    <property type="entry name" value="Fe3_Rdtase_TM_dom"/>
</dbReference>
<dbReference type="InterPro" id="IPR022837">
    <property type="entry name" value="MsrQ-like"/>
</dbReference>
<dbReference type="NCBIfam" id="NF003830">
    <property type="entry name" value="PRK05419.1-1"/>
    <property type="match status" value="1"/>
</dbReference>
<dbReference type="NCBIfam" id="NF003831">
    <property type="entry name" value="PRK05419.1-2"/>
    <property type="match status" value="1"/>
</dbReference>
<dbReference type="NCBIfam" id="NF003832">
    <property type="entry name" value="PRK05419.1-4"/>
    <property type="match status" value="1"/>
</dbReference>
<dbReference type="PANTHER" id="PTHR36964">
    <property type="entry name" value="PROTEIN-METHIONINE-SULFOXIDE REDUCTASE HEME-BINDING SUBUNIT MSRQ"/>
    <property type="match status" value="1"/>
</dbReference>
<dbReference type="PANTHER" id="PTHR36964:SF1">
    <property type="entry name" value="PROTEIN-METHIONINE-SULFOXIDE REDUCTASE HEME-BINDING SUBUNIT MSRQ"/>
    <property type="match status" value="1"/>
</dbReference>
<dbReference type="Pfam" id="PF01794">
    <property type="entry name" value="Ferric_reduct"/>
    <property type="match status" value="1"/>
</dbReference>
<protein>
    <recommendedName>
        <fullName evidence="1">Protein-methionine-sulfoxide reductase heme-binding subunit MsrQ</fullName>
    </recommendedName>
    <alternativeName>
        <fullName evidence="1">Flavocytochrome MsrQ</fullName>
    </alternativeName>
</protein>
<keyword id="KW-0997">Cell inner membrane</keyword>
<keyword id="KW-1003">Cell membrane</keyword>
<keyword id="KW-0249">Electron transport</keyword>
<keyword id="KW-0285">Flavoprotein</keyword>
<keyword id="KW-0288">FMN</keyword>
<keyword id="KW-0349">Heme</keyword>
<keyword id="KW-0408">Iron</keyword>
<keyword id="KW-0472">Membrane</keyword>
<keyword id="KW-0479">Metal-binding</keyword>
<keyword id="KW-0812">Transmembrane</keyword>
<keyword id="KW-1133">Transmembrane helix</keyword>
<keyword id="KW-0813">Transport</keyword>
<organism>
    <name type="scientific">Escherichia coli O8 (strain IAI1)</name>
    <dbReference type="NCBI Taxonomy" id="585034"/>
    <lineage>
        <taxon>Bacteria</taxon>
        <taxon>Pseudomonadati</taxon>
        <taxon>Pseudomonadota</taxon>
        <taxon>Gammaproteobacteria</taxon>
        <taxon>Enterobacterales</taxon>
        <taxon>Enterobacteriaceae</taxon>
        <taxon>Escherichia</taxon>
    </lineage>
</organism>
<reference key="1">
    <citation type="journal article" date="2009" name="PLoS Genet.">
        <title>Organised genome dynamics in the Escherichia coli species results in highly diverse adaptive paths.</title>
        <authorList>
            <person name="Touchon M."/>
            <person name="Hoede C."/>
            <person name="Tenaillon O."/>
            <person name="Barbe V."/>
            <person name="Baeriswyl S."/>
            <person name="Bidet P."/>
            <person name="Bingen E."/>
            <person name="Bonacorsi S."/>
            <person name="Bouchier C."/>
            <person name="Bouvet O."/>
            <person name="Calteau A."/>
            <person name="Chiapello H."/>
            <person name="Clermont O."/>
            <person name="Cruveiller S."/>
            <person name="Danchin A."/>
            <person name="Diard M."/>
            <person name="Dossat C."/>
            <person name="Karoui M.E."/>
            <person name="Frapy E."/>
            <person name="Garry L."/>
            <person name="Ghigo J.M."/>
            <person name="Gilles A.M."/>
            <person name="Johnson J."/>
            <person name="Le Bouguenec C."/>
            <person name="Lescat M."/>
            <person name="Mangenot S."/>
            <person name="Martinez-Jehanne V."/>
            <person name="Matic I."/>
            <person name="Nassif X."/>
            <person name="Oztas S."/>
            <person name="Petit M.A."/>
            <person name="Pichon C."/>
            <person name="Rouy Z."/>
            <person name="Ruf C.S."/>
            <person name="Schneider D."/>
            <person name="Tourret J."/>
            <person name="Vacherie B."/>
            <person name="Vallenet D."/>
            <person name="Medigue C."/>
            <person name="Rocha E.P.C."/>
            <person name="Denamur E."/>
        </authorList>
    </citation>
    <scope>NUCLEOTIDE SEQUENCE [LARGE SCALE GENOMIC DNA]</scope>
    <source>
        <strain>IAI1</strain>
    </source>
</reference>
<gene>
    <name evidence="1" type="primary">msrQ</name>
    <name type="ordered locus">ECIAI1_2052</name>
</gene>
<evidence type="ECO:0000255" key="1">
    <source>
        <dbReference type="HAMAP-Rule" id="MF_01207"/>
    </source>
</evidence>
<proteinExistence type="inferred from homology"/>
<sequence length="211" mass="24052">MRLTAKQVTWLKVSLHLAGLLPFLWLVWAINHGGLGADPVKDIQHFTGRTALKFLLATLLITPLARYAKQPLLIRTRRLLGLWCFAWATLHLTSYALLELGVNNLALLGKELITRPYLTLGIISWVILLALAFTSTQAMQRKLGKHWQQLHNFVYLVAILAPIHYLWSVKIISPQPLIYAGLAVLLLALRYKKLRSLFNRLRKQVHNKLSV</sequence>
<feature type="chain" id="PRO_1000138731" description="Protein-methionine-sulfoxide reductase heme-binding subunit MsrQ">
    <location>
        <begin position="1"/>
        <end position="211"/>
    </location>
</feature>
<feature type="transmembrane region" description="Helical" evidence="1">
    <location>
        <begin position="17"/>
        <end position="37"/>
    </location>
</feature>
<feature type="transmembrane region" description="Helical" evidence="1">
    <location>
        <begin position="82"/>
        <end position="102"/>
    </location>
</feature>
<feature type="transmembrane region" description="Helical" evidence="1">
    <location>
        <begin position="116"/>
        <end position="136"/>
    </location>
</feature>
<feature type="transmembrane region" description="Helical" evidence="1">
    <location>
        <begin position="153"/>
        <end position="173"/>
    </location>
</feature>
<name>MSRQ_ECO8A</name>
<accession>B7M3B0</accession>